<dbReference type="EMBL" id="AY665262">
    <property type="protein sequence ID" value="AAV74300.1"/>
    <property type="molecule type" value="mRNA"/>
</dbReference>
<dbReference type="RefSeq" id="NP_001029104.2">
    <property type="nucleotide sequence ID" value="NM_001033932.2"/>
</dbReference>
<dbReference type="SMR" id="Q5IS66"/>
<dbReference type="FunCoup" id="Q5IS66">
    <property type="interactions" value="865"/>
</dbReference>
<dbReference type="STRING" id="9598.ENSPTRP00000038211"/>
<dbReference type="GlyCosmos" id="Q5IS66">
    <property type="glycosylation" value="1 site, No reported glycans"/>
</dbReference>
<dbReference type="PaxDb" id="9598-ENSPTRP00000038211"/>
<dbReference type="GeneID" id="473740"/>
<dbReference type="KEGG" id="ptr:473740"/>
<dbReference type="CTD" id="3358"/>
<dbReference type="eggNOG" id="KOG3656">
    <property type="taxonomic scope" value="Eukaryota"/>
</dbReference>
<dbReference type="InParanoid" id="Q5IS66"/>
<dbReference type="OrthoDB" id="10355at9604"/>
<dbReference type="Proteomes" id="UP000002277">
    <property type="component" value="Unplaced"/>
</dbReference>
<dbReference type="GO" id="GO:0030425">
    <property type="term" value="C:dendrite"/>
    <property type="evidence" value="ECO:0000318"/>
    <property type="project" value="GO_Central"/>
</dbReference>
<dbReference type="GO" id="GO:0005886">
    <property type="term" value="C:plasma membrane"/>
    <property type="evidence" value="ECO:0000250"/>
    <property type="project" value="UniProtKB"/>
</dbReference>
<dbReference type="GO" id="GO:0045202">
    <property type="term" value="C:synapse"/>
    <property type="evidence" value="ECO:0007669"/>
    <property type="project" value="GOC"/>
</dbReference>
<dbReference type="GO" id="GO:0004993">
    <property type="term" value="F:G protein-coupled serotonin receptor activity"/>
    <property type="evidence" value="ECO:0000318"/>
    <property type="project" value="GO_Central"/>
</dbReference>
<dbReference type="GO" id="GO:0001587">
    <property type="term" value="F:Gq/11-coupled serotonin receptor activity"/>
    <property type="evidence" value="ECO:0000250"/>
    <property type="project" value="UniProtKB"/>
</dbReference>
<dbReference type="GO" id="GO:0030594">
    <property type="term" value="F:neurotransmitter receptor activity"/>
    <property type="evidence" value="ECO:0000318"/>
    <property type="project" value="GO_Central"/>
</dbReference>
<dbReference type="GO" id="GO:0099589">
    <property type="term" value="F:serotonin receptor activity"/>
    <property type="evidence" value="ECO:0007669"/>
    <property type="project" value="UniProtKB-ARBA"/>
</dbReference>
<dbReference type="GO" id="GO:0001662">
    <property type="term" value="P:behavioral fear response"/>
    <property type="evidence" value="ECO:0000250"/>
    <property type="project" value="UniProtKB"/>
</dbReference>
<dbReference type="GO" id="GO:0007268">
    <property type="term" value="P:chemical synaptic transmission"/>
    <property type="evidence" value="ECO:0000318"/>
    <property type="project" value="GO_Central"/>
</dbReference>
<dbReference type="GO" id="GO:0007631">
    <property type="term" value="P:feeding behavior"/>
    <property type="evidence" value="ECO:0000250"/>
    <property type="project" value="UniProtKB"/>
</dbReference>
<dbReference type="GO" id="GO:0007187">
    <property type="term" value="P:G protein-coupled receptor signaling pathway, coupled to cyclic nucleotide second messenger"/>
    <property type="evidence" value="ECO:0000318"/>
    <property type="project" value="GO_Central"/>
</dbReference>
<dbReference type="GO" id="GO:0007626">
    <property type="term" value="P:locomotory behavior"/>
    <property type="evidence" value="ECO:0007669"/>
    <property type="project" value="InterPro"/>
</dbReference>
<dbReference type="GO" id="GO:0007200">
    <property type="term" value="P:phospholipase C-activating G protein-coupled receptor signaling pathway"/>
    <property type="evidence" value="ECO:0000250"/>
    <property type="project" value="UniProtKB"/>
</dbReference>
<dbReference type="GO" id="GO:0007208">
    <property type="term" value="P:phospholipase C-activating serotonin receptor signaling pathway"/>
    <property type="evidence" value="ECO:0000250"/>
    <property type="project" value="UniProtKB"/>
</dbReference>
<dbReference type="GO" id="GO:0032098">
    <property type="term" value="P:regulation of appetite"/>
    <property type="evidence" value="ECO:0000250"/>
    <property type="project" value="UniProtKB"/>
</dbReference>
<dbReference type="GO" id="GO:0043397">
    <property type="term" value="P:regulation of corticotropin-releasing hormone secretion"/>
    <property type="evidence" value="ECO:0000250"/>
    <property type="project" value="UniProtKB"/>
</dbReference>
<dbReference type="GO" id="GO:0031644">
    <property type="term" value="P:regulation of nervous system process"/>
    <property type="evidence" value="ECO:0000250"/>
    <property type="project" value="UniProtKB"/>
</dbReference>
<dbReference type="GO" id="GO:0051209">
    <property type="term" value="P:release of sequestered calcium ion into cytosol"/>
    <property type="evidence" value="ECO:0000318"/>
    <property type="project" value="GO_Central"/>
</dbReference>
<dbReference type="GO" id="GO:0007210">
    <property type="term" value="P:serotonin receptor signaling pathway"/>
    <property type="evidence" value="ECO:0000318"/>
    <property type="project" value="GO_Central"/>
</dbReference>
<dbReference type="CDD" id="cd15305">
    <property type="entry name" value="7tmA_5-HT2C"/>
    <property type="match status" value="1"/>
</dbReference>
<dbReference type="Gene3D" id="1.20.1070.10">
    <property type="entry name" value="Rhodopsin 7-helix transmembrane proteins"/>
    <property type="match status" value="1"/>
</dbReference>
<dbReference type="InterPro" id="IPR000377">
    <property type="entry name" value="5HT2C_rcpt"/>
</dbReference>
<dbReference type="InterPro" id="IPR002231">
    <property type="entry name" value="5HT_rcpt"/>
</dbReference>
<dbReference type="InterPro" id="IPR000276">
    <property type="entry name" value="GPCR_Rhodpsn"/>
</dbReference>
<dbReference type="InterPro" id="IPR017452">
    <property type="entry name" value="GPCR_Rhodpsn_7TM"/>
</dbReference>
<dbReference type="PANTHER" id="PTHR24247">
    <property type="entry name" value="5-HYDROXYTRYPTAMINE RECEPTOR"/>
    <property type="match status" value="1"/>
</dbReference>
<dbReference type="PANTHER" id="PTHR24247:SF32">
    <property type="entry name" value="5-HYDROXYTRYPTAMINE RECEPTOR 2C"/>
    <property type="match status" value="1"/>
</dbReference>
<dbReference type="Pfam" id="PF00001">
    <property type="entry name" value="7tm_1"/>
    <property type="match status" value="1"/>
</dbReference>
<dbReference type="PRINTS" id="PR00517">
    <property type="entry name" value="5HT2CRECEPTR"/>
</dbReference>
<dbReference type="PRINTS" id="PR01101">
    <property type="entry name" value="5HTRECEPTOR"/>
</dbReference>
<dbReference type="PRINTS" id="PR00237">
    <property type="entry name" value="GPCRRHODOPSN"/>
</dbReference>
<dbReference type="SMART" id="SM01381">
    <property type="entry name" value="7TM_GPCR_Srsx"/>
    <property type="match status" value="1"/>
</dbReference>
<dbReference type="SUPFAM" id="SSF81321">
    <property type="entry name" value="Family A G protein-coupled receptor-like"/>
    <property type="match status" value="1"/>
</dbReference>
<dbReference type="PROSITE" id="PS00237">
    <property type="entry name" value="G_PROTEIN_RECEP_F1_1"/>
    <property type="match status" value="1"/>
</dbReference>
<dbReference type="PROSITE" id="PS50262">
    <property type="entry name" value="G_PROTEIN_RECEP_F1_2"/>
    <property type="match status" value="1"/>
</dbReference>
<protein>
    <recommendedName>
        <fullName evidence="1">5-hydroxytryptamine receptor 2C</fullName>
        <shortName>5-HT-2C</shortName>
        <shortName>5-HT2C</shortName>
        <shortName>5-HTR2C</shortName>
    </recommendedName>
    <alternativeName>
        <fullName>Serotonin receptor 2C</fullName>
    </alternativeName>
</protein>
<evidence type="ECO:0000250" key="1">
    <source>
        <dbReference type="UniProtKB" id="P28335"/>
    </source>
</evidence>
<evidence type="ECO:0000250" key="2">
    <source>
        <dbReference type="UniProtKB" id="P34968"/>
    </source>
</evidence>
<evidence type="ECO:0000250" key="3">
    <source>
        <dbReference type="UniProtKB" id="P41595"/>
    </source>
</evidence>
<evidence type="ECO:0000255" key="4"/>
<evidence type="ECO:0000255" key="5">
    <source>
        <dbReference type="PROSITE-ProRule" id="PRU00521"/>
    </source>
</evidence>
<evidence type="ECO:0000256" key="6">
    <source>
        <dbReference type="SAM" id="MobiDB-lite"/>
    </source>
</evidence>
<accession>Q5IS66</accession>
<feature type="signal peptide" evidence="1">
    <location>
        <begin position="1"/>
        <end position="32"/>
    </location>
</feature>
<feature type="chain" id="PRO_0000068960" description="5-hydroxytryptamine receptor 2C">
    <location>
        <begin position="33"/>
        <end position="458"/>
    </location>
</feature>
<feature type="topological domain" description="Extracellular" evidence="1">
    <location>
        <begin position="33"/>
        <end position="55"/>
    </location>
</feature>
<feature type="transmembrane region" description="Helical; Name=1" evidence="1">
    <location>
        <begin position="56"/>
        <end position="80"/>
    </location>
</feature>
<feature type="topological domain" description="Cytoplasmic" evidence="1">
    <location>
        <begin position="81"/>
        <end position="86"/>
    </location>
</feature>
<feature type="transmembrane region" description="Helical; Name=2" evidence="1">
    <location>
        <begin position="87"/>
        <end position="111"/>
    </location>
</feature>
<feature type="topological domain" description="Extracellular" evidence="1">
    <location>
        <begin position="112"/>
        <end position="128"/>
    </location>
</feature>
<feature type="transmembrane region" description="Helical; Name=3" evidence="1">
    <location>
        <begin position="129"/>
        <end position="151"/>
    </location>
</feature>
<feature type="topological domain" description="Cytoplasmic" evidence="1">
    <location>
        <begin position="152"/>
        <end position="167"/>
    </location>
</feature>
<feature type="transmembrane region" description="Helical; Name=4" evidence="1">
    <location>
        <begin position="168"/>
        <end position="189"/>
    </location>
</feature>
<feature type="topological domain" description="Extracellular" evidence="1">
    <location>
        <begin position="190"/>
        <end position="213"/>
    </location>
</feature>
<feature type="transmembrane region" description="Helical; Name=5" evidence="1">
    <location>
        <begin position="214"/>
        <end position="236"/>
    </location>
</feature>
<feature type="topological domain" description="Cytoplasmic" evidence="1">
    <location>
        <begin position="237"/>
        <end position="311"/>
    </location>
</feature>
<feature type="transmembrane region" description="Helical; Name=6" evidence="1">
    <location>
        <begin position="312"/>
        <end position="336"/>
    </location>
</feature>
<feature type="topological domain" description="Extracellular" evidence="1">
    <location>
        <begin position="337"/>
        <end position="347"/>
    </location>
</feature>
<feature type="transmembrane region" description="Helical; Name=7" evidence="1">
    <location>
        <begin position="348"/>
        <end position="370"/>
    </location>
</feature>
<feature type="topological domain" description="Cytoplasmic" evidence="1">
    <location>
        <begin position="371"/>
        <end position="458"/>
    </location>
</feature>
<feature type="region of interest" description="Disordered" evidence="6">
    <location>
        <begin position="274"/>
        <end position="301"/>
    </location>
</feature>
<feature type="short sequence motif" description="DRY motif; important for ligand-induced conformation changes" evidence="3">
    <location>
        <begin position="151"/>
        <end position="153"/>
    </location>
</feature>
<feature type="short sequence motif" description="NPxxY motif; important for ligand-induced conformation changes and signaling" evidence="3">
    <location>
        <begin position="364"/>
        <end position="368"/>
    </location>
</feature>
<feature type="short sequence motif" description="PDZ-binding">
    <location>
        <begin position="456"/>
        <end position="458"/>
    </location>
</feature>
<feature type="compositionally biased region" description="Basic residues" evidence="6">
    <location>
        <begin position="287"/>
        <end position="297"/>
    </location>
</feature>
<feature type="binding site" evidence="1">
    <location>
        <position position="139"/>
    </location>
    <ligand>
        <name>ergotamine</name>
        <dbReference type="ChEBI" id="CHEBI:190463"/>
        <note>agonist</note>
    </ligand>
</feature>
<feature type="binding site" evidence="1">
    <location>
        <position position="209"/>
    </location>
    <ligand>
        <name>ergotamine</name>
        <dbReference type="ChEBI" id="CHEBI:190463"/>
        <note>agonist</note>
    </ligand>
</feature>
<feature type="disulfide bond" evidence="5">
    <location>
        <begin position="127"/>
        <end position="207"/>
    </location>
</feature>
<feature type="disulfide bond" evidence="5">
    <location>
        <begin position="337"/>
        <end position="341"/>
    </location>
</feature>
<organism>
    <name type="scientific">Pan troglodytes</name>
    <name type="common">Chimpanzee</name>
    <dbReference type="NCBI Taxonomy" id="9598"/>
    <lineage>
        <taxon>Eukaryota</taxon>
        <taxon>Metazoa</taxon>
        <taxon>Chordata</taxon>
        <taxon>Craniata</taxon>
        <taxon>Vertebrata</taxon>
        <taxon>Euteleostomi</taxon>
        <taxon>Mammalia</taxon>
        <taxon>Eutheria</taxon>
        <taxon>Euarchontoglires</taxon>
        <taxon>Primates</taxon>
        <taxon>Haplorrhini</taxon>
        <taxon>Catarrhini</taxon>
        <taxon>Hominidae</taxon>
        <taxon>Pan</taxon>
    </lineage>
</organism>
<sequence>MVNLRNAVHSFLVHLIGLLVWQCDISVSPVAAIVTDIFNTSDGGRFKFPDGVQNWPALSIVVIIIMTIGGNILVIMAVSMEKKLHNATNYFLMSLAIADMLVGLLVMPLSLLAILYDYVWPLPRYLCPVWISLDVLFSTASIMHLCAISLDRYVAIRNPIEHSRFNSRTKAIMKIAIVWAISIGVSVPIPVIGLRDERKVFVNNTTCVLNDPNFVLIGSFVAFFIPLTIMVITYCLTIYVLRRQALMLLHGHTEEPPGLSLDFLKCCKRNTAEEENSANPNQDQNARRRKKKERRPRGTMQAINNERKASKVLGIVFFVFLIMWCPFFITNILSVLCEKSCNQKLMEKLLNVFVWIGYVCSGINPLVYTLFNKIYRRAFSNYLRCNYKVEKKPPVRQIPRVAATALSGRELNVNIYRHTNEPVIEKASDNEPGIEMQVENLELPVNPSSVVSERISSV</sequence>
<reference key="1">
    <citation type="journal article" date="2004" name="Cell">
        <title>Accelerated evolution of nervous system genes in the origin of Homo sapiens.</title>
        <authorList>
            <person name="Dorus S."/>
            <person name="Vallender E.J."/>
            <person name="Evans P.D."/>
            <person name="Anderson J.R."/>
            <person name="Gilbert S.L."/>
            <person name="Mahowald M."/>
            <person name="Wyckoff G.J."/>
            <person name="Malcom C.M."/>
            <person name="Lahn B.T."/>
        </authorList>
    </citation>
    <scope>NUCLEOTIDE SEQUENCE [MRNA]</scope>
</reference>
<name>5HT2C_PANTR</name>
<comment type="function">
    <text evidence="1 2">G-protein coupled receptor for 5-hydroxytryptamine (serotonin). Also functions as a receptor for various drugs and psychoactive substances, including ergot alkaloid derivatives, 1-2,5,-dimethoxy-4-iodophenyl-2-aminopropane (DOI) and lysergic acid diethylamide (LSD). Ligand binding causes a conformation change that triggers signaling via guanine nucleotide-binding proteins (G proteins) and modulates the activity of downstream effectors. HTR2C is coupled to G(q)/G(11) G alpha proteins and activates phospholipase C-beta, releasing diacylglycerol (DAG) and inositol 1,4,5-trisphosphate (IP3) second messengers that modulate the activity of phosphatidylinositol 3-kinase and promote the release of Ca(2+) ions from intracellular stores, respectively. Beta-arrestin family members inhibit signaling via G proteins and mediate activation of alternative signaling pathways (By similarity). Regulates neuronal activity via the activation of short transient receptor potential calcium channels in the brain, and thereby modulates the activation of pro-opiomelanocortin neurons and the release of CRH that then regulates the release of corticosterone. Plays a role in the regulation of appetite and eating behavior, responses to anxiogenic stimuli and stress. Plays a role in insulin sensitivity and glucose homeostasis (By similarity).</text>
</comment>
<comment type="subunit">
    <text evidence="1">Interacts with MPDZ. Interacts with ARRB2. Interacts with MPP3; this interaction stabilizes the receptor at the plasma membrane and prevents the desensitization of the HTR2C receptor-mediated calcium response.</text>
</comment>
<comment type="subcellular location">
    <subcellularLocation>
        <location evidence="1">Cell membrane</location>
        <topology evidence="4">Multi-pass membrane protein</topology>
    </subcellularLocation>
</comment>
<comment type="domain">
    <text evidence="1">The PDZ domain-binding motif is involved in the interaction with MPDZ.</text>
</comment>
<comment type="similarity">
    <text evidence="5">Belongs to the G-protein coupled receptor 1 family.</text>
</comment>
<gene>
    <name evidence="1" type="primary">HTR2C</name>
</gene>
<keyword id="KW-0085">Behavior</keyword>
<keyword id="KW-1003">Cell membrane</keyword>
<keyword id="KW-1015">Disulfide bond</keyword>
<keyword id="KW-0297">G-protein coupled receptor</keyword>
<keyword id="KW-0472">Membrane</keyword>
<keyword id="KW-0675">Receptor</keyword>
<keyword id="KW-1185">Reference proteome</keyword>
<keyword id="KW-0732">Signal</keyword>
<keyword id="KW-0807">Transducer</keyword>
<keyword id="KW-0812">Transmembrane</keyword>
<keyword id="KW-1133">Transmembrane helix</keyword>
<proteinExistence type="evidence at transcript level"/>